<accession>F2ST24</accession>
<accession>A0A080WV70</accession>
<gene>
    <name evidence="6" type="primary">LysM1</name>
    <name type="ORF">TERG_05627</name>
</gene>
<name>LYSM1_TRIRC</name>
<sequence length="252" mass="27162">MLPELLLARVLHPRAVICSFAIPGDPGDTCDTLSDRWGITIDIFKSLNPGVNCPNLVANMEYCVAGTVSPDTPSTTTTAKPTMTPTSTPTKTTTTSTATTTRAMTTTISSDAPSPTQPGLAKDCDKFHLVVSGDNCYSIQTKYGISTDQFKAWNPYINAECSNLWADYYVCVHVPGATISTSMPMPTPSGPQPQMPGIVSNCRKFHLIQAGDNCYTINQAVGITLAQFRSWNKNVNADCSNIWLGYYVCIGV</sequence>
<dbReference type="EMBL" id="GG700653">
    <property type="protein sequence ID" value="EGD89384.2"/>
    <property type="status" value="ALT_INIT"/>
    <property type="molecule type" value="Genomic_DNA"/>
</dbReference>
<dbReference type="EMBL" id="GG700653">
    <property type="protein sequence ID" value="KFL62018.1"/>
    <property type="status" value="ALT_SEQ"/>
    <property type="molecule type" value="Genomic_DNA"/>
</dbReference>
<dbReference type="RefSeq" id="XP_003233753.1">
    <property type="nucleotide sequence ID" value="XM_003233705.1"/>
</dbReference>
<dbReference type="SMR" id="F2ST24"/>
<dbReference type="STRING" id="559305.F2ST24"/>
<dbReference type="GeneID" id="10372384"/>
<dbReference type="VEuPathDB" id="FungiDB:TERG_05627"/>
<dbReference type="eggNOG" id="KOG2806">
    <property type="taxonomic scope" value="Eukaryota"/>
</dbReference>
<dbReference type="HOGENOM" id="CLU_010591_0_1_1"/>
<dbReference type="InParanoid" id="F2ST24"/>
<dbReference type="OMA" id="DYYICVH"/>
<dbReference type="OrthoDB" id="5985073at2759"/>
<dbReference type="Proteomes" id="UP000008864">
    <property type="component" value="Unassembled WGS sequence"/>
</dbReference>
<dbReference type="GO" id="GO:0005576">
    <property type="term" value="C:extracellular region"/>
    <property type="evidence" value="ECO:0007669"/>
    <property type="project" value="UniProtKB-SubCell"/>
</dbReference>
<dbReference type="GO" id="GO:0008061">
    <property type="term" value="F:chitin binding"/>
    <property type="evidence" value="ECO:0007669"/>
    <property type="project" value="UniProtKB-KW"/>
</dbReference>
<dbReference type="CDD" id="cd00118">
    <property type="entry name" value="LysM"/>
    <property type="match status" value="3"/>
</dbReference>
<dbReference type="Gene3D" id="3.10.350.10">
    <property type="entry name" value="LysM domain"/>
    <property type="match status" value="3"/>
</dbReference>
<dbReference type="InterPro" id="IPR052210">
    <property type="entry name" value="LysM1-like"/>
</dbReference>
<dbReference type="InterPro" id="IPR018392">
    <property type="entry name" value="LysM_dom"/>
</dbReference>
<dbReference type="InterPro" id="IPR036779">
    <property type="entry name" value="LysM_dom_sf"/>
</dbReference>
<dbReference type="PANTHER" id="PTHR34997">
    <property type="entry name" value="AM15"/>
    <property type="match status" value="1"/>
</dbReference>
<dbReference type="PANTHER" id="PTHR34997:SF1">
    <property type="entry name" value="PEPTIDOGLYCAN-BINDING LYSIN DOMAIN"/>
    <property type="match status" value="1"/>
</dbReference>
<dbReference type="Pfam" id="PF01476">
    <property type="entry name" value="LysM"/>
    <property type="match status" value="3"/>
</dbReference>
<dbReference type="SMART" id="SM00257">
    <property type="entry name" value="LysM"/>
    <property type="match status" value="3"/>
</dbReference>
<dbReference type="SUPFAM" id="SSF54106">
    <property type="entry name" value="LysM domain"/>
    <property type="match status" value="2"/>
</dbReference>
<dbReference type="PROSITE" id="PS51782">
    <property type="entry name" value="LYSM"/>
    <property type="match status" value="3"/>
</dbReference>
<reference key="1">
    <citation type="journal article" date="2012" name="MBio">
        <title>Comparative genome analysis of Trichophyton rubrum and related dermatophytes reveals candidate genes involved in infection.</title>
        <authorList>
            <person name="Martinez D.A."/>
            <person name="Oliver B.G."/>
            <person name="Graeser Y."/>
            <person name="Goldberg J.M."/>
            <person name="Li W."/>
            <person name="Martinez-Rossi N.M."/>
            <person name="Monod M."/>
            <person name="Shelest E."/>
            <person name="Barton R.C."/>
            <person name="Birch E."/>
            <person name="Brakhage A.A."/>
            <person name="Chen Z."/>
            <person name="Gurr S.J."/>
            <person name="Heiman D."/>
            <person name="Heitman J."/>
            <person name="Kosti I."/>
            <person name="Rossi A."/>
            <person name="Saif S."/>
            <person name="Samalova M."/>
            <person name="Saunders C.W."/>
            <person name="Shea T."/>
            <person name="Summerbell R.C."/>
            <person name="Xu J."/>
            <person name="Young S."/>
            <person name="Zeng Q."/>
            <person name="Birren B.W."/>
            <person name="Cuomo C.A."/>
            <person name="White T.C."/>
        </authorList>
    </citation>
    <scope>NUCLEOTIDE SEQUENCE [LARGE SCALE GENOMIC DNA]</scope>
    <scope>INDUCTION</scope>
    <source>
        <strain>ATCC MYA-4607 / CBS 118892</strain>
    </source>
</reference>
<reference key="2">
    <citation type="journal article" date="2019" name="PLoS ONE">
        <title>Trichophyton rubrum LysM proteins bind to fungal cell wall chitin and to the N-linked oligosaccharides present on human skin glycoproteins.</title>
        <authorList>
            <person name="Kar B."/>
            <person name="Patel P."/>
            <person name="Free S.J."/>
        </authorList>
    </citation>
    <scope>FUNCTION</scope>
    <scope>SUBCELLULAR LOCATION</scope>
    <scope>CHITIN-BINDING</scope>
    <scope>DOMAIN</scope>
</reference>
<reference key="3">
    <citation type="journal article" date="2020" name="Med. Mycol.">
        <title>Genes coding for LysM domains in the dermatophyte Trichophyton rubrum: A transcription analysis.</title>
        <authorList>
            <person name="Lopes L."/>
            <person name="Bitencourt T.A."/>
            <person name="Lang E.A.S."/>
            <person name="Sanches P.R."/>
            <person name="Peres N.T.A."/>
            <person name="Rossi A."/>
            <person name="Martinez-Rossi N.M."/>
        </authorList>
    </citation>
    <scope>INDUCTION</scope>
</reference>
<evidence type="ECO:0000255" key="1">
    <source>
        <dbReference type="PROSITE-ProRule" id="PRU01118"/>
    </source>
</evidence>
<evidence type="ECO:0000256" key="2">
    <source>
        <dbReference type="SAM" id="MobiDB-lite"/>
    </source>
</evidence>
<evidence type="ECO:0000269" key="3">
    <source>
    </source>
</evidence>
<evidence type="ECO:0000269" key="4">
    <source>
    </source>
</evidence>
<evidence type="ECO:0000269" key="5">
    <source>
    </source>
</evidence>
<evidence type="ECO:0000303" key="6">
    <source>
    </source>
</evidence>
<evidence type="ECO:0000305" key="7"/>
<evidence type="ECO:0000305" key="8">
    <source>
    </source>
</evidence>
<keyword id="KW-0134">Cell wall</keyword>
<keyword id="KW-0147">Chitin-binding</keyword>
<keyword id="KW-1185">Reference proteome</keyword>
<keyword id="KW-0677">Repeat</keyword>
<keyword id="KW-0964">Secreted</keyword>
<keyword id="KW-0732">Signal</keyword>
<keyword id="KW-0843">Virulence</keyword>
<protein>
    <recommendedName>
        <fullName evidence="6">Secreted LysM effector LysM1</fullName>
    </recommendedName>
    <alternativeName>
        <fullName evidence="6">LysM domain-containing protein 1</fullName>
    </alternativeName>
</protein>
<comment type="function">
    <text evidence="4 8">Secreted effector that binds two substrates, chitin and N-linked oligosaccharides associated with human skin glycoproteins (PubMed:30947244). Could provide the pathogen with three important functions including shielding host cell wall chitin from the human immune system, shielding the pathogen's glycoproteins from host degradation and immune surveillance, and helping facilitate pathogen adhesion to human skin (Probable).</text>
</comment>
<comment type="subcellular location">
    <subcellularLocation>
        <location evidence="4">Secreted</location>
    </subcellularLocation>
    <subcellularLocation>
        <location evidence="4">Secreted</location>
        <location evidence="4">Cell wall</location>
    </subcellularLocation>
</comment>
<comment type="induction">
    <text evidence="3 5">Expression is induced during growth on keratin powder but not on human nail fragments.</text>
</comment>
<comment type="domain">
    <text evidence="8">The LysM (lysin motif) domains are small globular domains involved in binding chitin in eukaryotes. LysM1 contains 3 LysM domains.</text>
</comment>
<comment type="domain">
    <text evidence="4">LysM domains 2 and 3 bind both chitin and human skin glycoproteins.</text>
</comment>
<comment type="similarity">
    <text evidence="7">Belongs to the secreted LysM effector family.</text>
</comment>
<comment type="sequence caution" evidence="4">
    <conflict type="erroneous initiation">
        <sequence resource="EMBL-CDS" id="EGD89384"/>
    </conflict>
    <text>Extended N-terminus.</text>
</comment>
<comment type="sequence caution" evidence="7">
    <conflict type="erroneous gene model prediction">
        <sequence resource="EMBL-CDS" id="KFL62018"/>
    </conflict>
</comment>
<feature type="signal peptide" evidence="8">
    <location>
        <begin position="1"/>
        <end status="unknown"/>
    </location>
</feature>
<feature type="chain" id="PRO_0000460664" description="Secreted LysM effector LysM1">
    <location>
        <begin status="unknown"/>
        <end position="252"/>
    </location>
</feature>
<feature type="domain" description="LysM 1" evidence="1">
    <location>
        <begin position="20"/>
        <end position="64"/>
    </location>
</feature>
<feature type="domain" description="LysM 2" evidence="1">
    <location>
        <begin position="126"/>
        <end position="172"/>
    </location>
</feature>
<feature type="domain" description="LysM 3" evidence="1">
    <location>
        <begin position="204"/>
        <end position="250"/>
    </location>
</feature>
<feature type="region of interest" description="Disordered" evidence="2">
    <location>
        <begin position="71"/>
        <end position="98"/>
    </location>
</feature>
<feature type="compositionally biased region" description="Low complexity" evidence="2">
    <location>
        <begin position="72"/>
        <end position="98"/>
    </location>
</feature>
<organism>
    <name type="scientific">Trichophyton rubrum (strain ATCC MYA-4607 / CBS 118892)</name>
    <name type="common">Athlete's foot fungus</name>
    <dbReference type="NCBI Taxonomy" id="559305"/>
    <lineage>
        <taxon>Eukaryota</taxon>
        <taxon>Fungi</taxon>
        <taxon>Dikarya</taxon>
        <taxon>Ascomycota</taxon>
        <taxon>Pezizomycotina</taxon>
        <taxon>Eurotiomycetes</taxon>
        <taxon>Eurotiomycetidae</taxon>
        <taxon>Onygenales</taxon>
        <taxon>Arthrodermataceae</taxon>
        <taxon>Trichophyton</taxon>
    </lineage>
</organism>
<proteinExistence type="evidence at protein level"/>